<feature type="chain" id="PRO_1000205843" description="Lipid-A-disaccharide synthase">
    <location>
        <begin position="1"/>
        <end position="380"/>
    </location>
</feature>
<evidence type="ECO:0000255" key="1">
    <source>
        <dbReference type="HAMAP-Rule" id="MF_00392"/>
    </source>
</evidence>
<protein>
    <recommendedName>
        <fullName evidence="1">Lipid-A-disaccharide synthase</fullName>
        <ecNumber evidence="1">2.4.1.182</ecNumber>
    </recommendedName>
</protein>
<organism>
    <name type="scientific">Azotobacter vinelandii (strain DJ / ATCC BAA-1303)</name>
    <dbReference type="NCBI Taxonomy" id="322710"/>
    <lineage>
        <taxon>Bacteria</taxon>
        <taxon>Pseudomonadati</taxon>
        <taxon>Pseudomonadota</taxon>
        <taxon>Gammaproteobacteria</taxon>
        <taxon>Pseudomonadales</taxon>
        <taxon>Pseudomonadaceae</taxon>
        <taxon>Azotobacter</taxon>
    </lineage>
</organism>
<comment type="function">
    <text evidence="1">Condensation of UDP-2,3-diacylglucosamine and 2,3-diacylglucosamine-1-phosphate to form lipid A disaccharide, a precursor of lipid A, a phosphorylated glycolipid that anchors the lipopolysaccharide to the outer membrane of the cell.</text>
</comment>
<comment type="catalytic activity">
    <reaction evidence="1">
        <text>a lipid X + a UDP-2-N,3-O-bis[(3R)-3-hydroxyacyl]-alpha-D-glucosamine = a lipid A disaccharide + UDP + H(+)</text>
        <dbReference type="Rhea" id="RHEA:67828"/>
        <dbReference type="ChEBI" id="CHEBI:15378"/>
        <dbReference type="ChEBI" id="CHEBI:58223"/>
        <dbReference type="ChEBI" id="CHEBI:137748"/>
        <dbReference type="ChEBI" id="CHEBI:176338"/>
        <dbReference type="ChEBI" id="CHEBI:176343"/>
        <dbReference type="EC" id="2.4.1.182"/>
    </reaction>
</comment>
<comment type="pathway">
    <text evidence="1">Bacterial outer membrane biogenesis; LPS lipid A biosynthesis.</text>
</comment>
<comment type="similarity">
    <text evidence="1">Belongs to the LpxB family.</text>
</comment>
<accession>C1DST3</accession>
<sequence length="380" mass="42115">MAGVLRVALVAGEASGDILGASLMQALKAVRPDIEFIGVGGPRMQAEGLQSYFPMERLAVMGLFEVLGRLPELLLRRRWLIRDLLEARPDLYIGIDAPDFNLGIELRLRRAGIRTVHYVSPSVWAWRQKRVLKIRQACDLMLTLFPFEAEFYEARNVPVRFVGHPLADQIPLQTDRDAARAALDLTDGETIVALLPGSRGGELARLGPLFIEAAERLLALHAGPLRFVVPCASPERRRQLEEMLSHTRRDLPVMLLDGRSHEALAACDAVLIASGTATLEALLYKRPMVVAYRLAPLTYKVARHLVKTPFFSLPNLLAGRALVPELLQDRATPEALAEALIPLLEIGGEQTECFDAIHRSLRRDASRRAAESVLELAERA</sequence>
<keyword id="KW-0328">Glycosyltransferase</keyword>
<keyword id="KW-0441">Lipid A biosynthesis</keyword>
<keyword id="KW-0444">Lipid biosynthesis</keyword>
<keyword id="KW-0443">Lipid metabolism</keyword>
<keyword id="KW-0808">Transferase</keyword>
<dbReference type="EC" id="2.4.1.182" evidence="1"/>
<dbReference type="EMBL" id="CP001157">
    <property type="protein sequence ID" value="ACO80026.1"/>
    <property type="molecule type" value="Genomic_DNA"/>
</dbReference>
<dbReference type="RefSeq" id="WP_012702401.1">
    <property type="nucleotide sequence ID" value="NC_012560.1"/>
</dbReference>
<dbReference type="SMR" id="C1DST3"/>
<dbReference type="STRING" id="322710.Avin_38860"/>
<dbReference type="CAZy" id="GT19">
    <property type="family name" value="Glycosyltransferase Family 19"/>
</dbReference>
<dbReference type="EnsemblBacteria" id="ACO80026">
    <property type="protein sequence ID" value="ACO80026"/>
    <property type="gene ID" value="Avin_38860"/>
</dbReference>
<dbReference type="GeneID" id="88186844"/>
<dbReference type="KEGG" id="avn:Avin_38860"/>
<dbReference type="eggNOG" id="COG0763">
    <property type="taxonomic scope" value="Bacteria"/>
</dbReference>
<dbReference type="HOGENOM" id="CLU_036577_3_0_6"/>
<dbReference type="OrthoDB" id="9801642at2"/>
<dbReference type="UniPathway" id="UPA00973"/>
<dbReference type="Proteomes" id="UP000002424">
    <property type="component" value="Chromosome"/>
</dbReference>
<dbReference type="GO" id="GO:0016020">
    <property type="term" value="C:membrane"/>
    <property type="evidence" value="ECO:0007669"/>
    <property type="project" value="GOC"/>
</dbReference>
<dbReference type="GO" id="GO:0008915">
    <property type="term" value="F:lipid-A-disaccharide synthase activity"/>
    <property type="evidence" value="ECO:0007669"/>
    <property type="project" value="UniProtKB-UniRule"/>
</dbReference>
<dbReference type="GO" id="GO:0005543">
    <property type="term" value="F:phospholipid binding"/>
    <property type="evidence" value="ECO:0007669"/>
    <property type="project" value="TreeGrafter"/>
</dbReference>
<dbReference type="GO" id="GO:0009245">
    <property type="term" value="P:lipid A biosynthetic process"/>
    <property type="evidence" value="ECO:0007669"/>
    <property type="project" value="UniProtKB-UniRule"/>
</dbReference>
<dbReference type="HAMAP" id="MF_00392">
    <property type="entry name" value="LpxB"/>
    <property type="match status" value="1"/>
</dbReference>
<dbReference type="InterPro" id="IPR003835">
    <property type="entry name" value="Glyco_trans_19"/>
</dbReference>
<dbReference type="NCBIfam" id="TIGR00215">
    <property type="entry name" value="lpxB"/>
    <property type="match status" value="1"/>
</dbReference>
<dbReference type="PANTHER" id="PTHR30372">
    <property type="entry name" value="LIPID-A-DISACCHARIDE SYNTHASE"/>
    <property type="match status" value="1"/>
</dbReference>
<dbReference type="PANTHER" id="PTHR30372:SF4">
    <property type="entry name" value="LIPID-A-DISACCHARIDE SYNTHASE, MITOCHONDRIAL-RELATED"/>
    <property type="match status" value="1"/>
</dbReference>
<dbReference type="Pfam" id="PF02684">
    <property type="entry name" value="LpxB"/>
    <property type="match status" value="1"/>
</dbReference>
<dbReference type="SUPFAM" id="SSF53756">
    <property type="entry name" value="UDP-Glycosyltransferase/glycogen phosphorylase"/>
    <property type="match status" value="1"/>
</dbReference>
<proteinExistence type="inferred from homology"/>
<gene>
    <name evidence="1" type="primary">lpxB</name>
    <name type="ordered locus">Avin_38860</name>
</gene>
<reference key="1">
    <citation type="journal article" date="2009" name="J. Bacteriol.">
        <title>Genome sequence of Azotobacter vinelandii, an obligate aerobe specialized to support diverse anaerobic metabolic processes.</title>
        <authorList>
            <person name="Setubal J.C."/>
            <person name="Dos Santos P."/>
            <person name="Goldman B.S."/>
            <person name="Ertesvaag H."/>
            <person name="Espin G."/>
            <person name="Rubio L.M."/>
            <person name="Valla S."/>
            <person name="Almeida N.F."/>
            <person name="Balasubramanian D."/>
            <person name="Cromes L."/>
            <person name="Curatti L."/>
            <person name="Du Z."/>
            <person name="Godsy E."/>
            <person name="Goodner B."/>
            <person name="Hellner-Burris K."/>
            <person name="Hernandez J.A."/>
            <person name="Houmiel K."/>
            <person name="Imperial J."/>
            <person name="Kennedy C."/>
            <person name="Larson T.J."/>
            <person name="Latreille P."/>
            <person name="Ligon L.S."/>
            <person name="Lu J."/>
            <person name="Maerk M."/>
            <person name="Miller N.M."/>
            <person name="Norton S."/>
            <person name="O'Carroll I.P."/>
            <person name="Paulsen I."/>
            <person name="Raulfs E.C."/>
            <person name="Roemer R."/>
            <person name="Rosser J."/>
            <person name="Segura D."/>
            <person name="Slater S."/>
            <person name="Stricklin S.L."/>
            <person name="Studholme D.J."/>
            <person name="Sun J."/>
            <person name="Viana C.J."/>
            <person name="Wallin E."/>
            <person name="Wang B."/>
            <person name="Wheeler C."/>
            <person name="Zhu H."/>
            <person name="Dean D.R."/>
            <person name="Dixon R."/>
            <person name="Wood D."/>
        </authorList>
    </citation>
    <scope>NUCLEOTIDE SEQUENCE [LARGE SCALE GENOMIC DNA]</scope>
    <source>
        <strain>DJ / ATCC BAA-1303</strain>
    </source>
</reference>
<name>LPXB_AZOVD</name>